<keyword id="KW-0012">Acyltransferase</keyword>
<keyword id="KW-0963">Cytoplasm</keyword>
<keyword id="KW-0276">Fatty acid metabolism</keyword>
<keyword id="KW-0442">Lipid degradation</keyword>
<keyword id="KW-0443">Lipid metabolism</keyword>
<keyword id="KW-1185">Reference proteome</keyword>
<keyword id="KW-0808">Transferase</keyword>
<organism>
    <name type="scientific">Shewanella amazonensis (strain ATCC BAA-1098 / SB2B)</name>
    <dbReference type="NCBI Taxonomy" id="326297"/>
    <lineage>
        <taxon>Bacteria</taxon>
        <taxon>Pseudomonadati</taxon>
        <taxon>Pseudomonadota</taxon>
        <taxon>Gammaproteobacteria</taxon>
        <taxon>Alteromonadales</taxon>
        <taxon>Shewanellaceae</taxon>
        <taxon>Shewanella</taxon>
    </lineage>
</organism>
<evidence type="ECO:0000255" key="1">
    <source>
        <dbReference type="HAMAP-Rule" id="MF_01618"/>
    </source>
</evidence>
<proteinExistence type="inferred from homology"/>
<sequence length="436" mass="46443">MSDRQQVTNARGERIAIVSGLRTPFAKQATAFHGVSALDMGKMVVNELLSRSELDPKLVEQLVYGQVVQMPAAPNIAREIVLGTGMNVATDAYSVTRACATSFQSTVNIAESIMTGNIEIGIAGGADSSSVLPIGVSKKLAHALVDLTKARTFGQKLAIFRRLGIKDLLPVPPAVAEYSTGLSMGQTAEQMAKTHGISRADQDAMAHRSHTLAAQTWASGVMKNEVMVAHVPPYNQFIEKDNNIRESSDLASYAKLRPVFDRKHGSVTAANSTPLTDGASALLLMSEGRAKALGYTPIGYIKSYAFAAIDVWEDMLMGPSYATPMALKRAGMQLEDLTLIEMHEAFAAQALANMKMFASKKFAEEKLGQNRAIGEIDMSKFNVLGGSLAYGHPFAATGARLITQMCNELKRRGGGVGLTTACAAGGLGAAMILEVE</sequence>
<accession>A1S7L7</accession>
<name>FADI_SHEAM</name>
<comment type="function">
    <text evidence="1">Catalyzes the final step of fatty acid oxidation in which acetyl-CoA is released and the CoA ester of a fatty acid two carbons shorter is formed.</text>
</comment>
<comment type="catalytic activity">
    <reaction evidence="1">
        <text>an acyl-CoA + acetyl-CoA = a 3-oxoacyl-CoA + CoA</text>
        <dbReference type="Rhea" id="RHEA:21564"/>
        <dbReference type="ChEBI" id="CHEBI:57287"/>
        <dbReference type="ChEBI" id="CHEBI:57288"/>
        <dbReference type="ChEBI" id="CHEBI:58342"/>
        <dbReference type="ChEBI" id="CHEBI:90726"/>
        <dbReference type="EC" id="2.3.1.16"/>
    </reaction>
</comment>
<comment type="pathway">
    <text evidence="1">Lipid metabolism; fatty acid beta-oxidation.</text>
</comment>
<comment type="subunit">
    <text evidence="1">Heterotetramer of two alpha chains (FadJ) and two beta chains (FadI).</text>
</comment>
<comment type="subcellular location">
    <subcellularLocation>
        <location evidence="1">Cytoplasm</location>
    </subcellularLocation>
</comment>
<comment type="similarity">
    <text evidence="1">Belongs to the thiolase-like superfamily. Thiolase family.</text>
</comment>
<dbReference type="EC" id="2.3.1.16" evidence="1"/>
<dbReference type="EMBL" id="CP000507">
    <property type="protein sequence ID" value="ABM00374.1"/>
    <property type="molecule type" value="Genomic_DNA"/>
</dbReference>
<dbReference type="RefSeq" id="WP_011760281.1">
    <property type="nucleotide sequence ID" value="NC_008700.1"/>
</dbReference>
<dbReference type="SMR" id="A1S7L7"/>
<dbReference type="STRING" id="326297.Sama_2168"/>
<dbReference type="KEGG" id="saz:Sama_2168"/>
<dbReference type="eggNOG" id="COG0183">
    <property type="taxonomic scope" value="Bacteria"/>
</dbReference>
<dbReference type="HOGENOM" id="CLU_031026_2_0_6"/>
<dbReference type="OrthoDB" id="1402717at2"/>
<dbReference type="UniPathway" id="UPA00659"/>
<dbReference type="Proteomes" id="UP000009175">
    <property type="component" value="Chromosome"/>
</dbReference>
<dbReference type="GO" id="GO:0005829">
    <property type="term" value="C:cytosol"/>
    <property type="evidence" value="ECO:0007669"/>
    <property type="project" value="TreeGrafter"/>
</dbReference>
<dbReference type="GO" id="GO:0003988">
    <property type="term" value="F:acetyl-CoA C-acyltransferase activity"/>
    <property type="evidence" value="ECO:0007669"/>
    <property type="project" value="UniProtKB-UniRule"/>
</dbReference>
<dbReference type="GO" id="GO:0006635">
    <property type="term" value="P:fatty acid beta-oxidation"/>
    <property type="evidence" value="ECO:0007669"/>
    <property type="project" value="UniProtKB-UniRule"/>
</dbReference>
<dbReference type="CDD" id="cd00751">
    <property type="entry name" value="thiolase"/>
    <property type="match status" value="1"/>
</dbReference>
<dbReference type="FunFam" id="3.40.47.10:FF:000011">
    <property type="entry name" value="3-ketoacyl-CoA thiolase"/>
    <property type="match status" value="1"/>
</dbReference>
<dbReference type="Gene3D" id="3.40.47.10">
    <property type="match status" value="1"/>
</dbReference>
<dbReference type="HAMAP" id="MF_01618">
    <property type="entry name" value="FadI"/>
    <property type="match status" value="1"/>
</dbReference>
<dbReference type="InterPro" id="IPR012806">
    <property type="entry name" value="Ac-CoA_C-AcTrfase_FadI"/>
</dbReference>
<dbReference type="InterPro" id="IPR002155">
    <property type="entry name" value="Thiolase"/>
</dbReference>
<dbReference type="InterPro" id="IPR016039">
    <property type="entry name" value="Thiolase-like"/>
</dbReference>
<dbReference type="InterPro" id="IPR020610">
    <property type="entry name" value="Thiolase_AS"/>
</dbReference>
<dbReference type="InterPro" id="IPR020617">
    <property type="entry name" value="Thiolase_C"/>
</dbReference>
<dbReference type="InterPro" id="IPR020613">
    <property type="entry name" value="Thiolase_CS"/>
</dbReference>
<dbReference type="InterPro" id="IPR020616">
    <property type="entry name" value="Thiolase_N"/>
</dbReference>
<dbReference type="NCBIfam" id="TIGR01930">
    <property type="entry name" value="AcCoA-C-Actrans"/>
    <property type="match status" value="1"/>
</dbReference>
<dbReference type="NCBIfam" id="TIGR02446">
    <property type="entry name" value="FadI"/>
    <property type="match status" value="1"/>
</dbReference>
<dbReference type="NCBIfam" id="NF006516">
    <property type="entry name" value="PRK08963.1"/>
    <property type="match status" value="1"/>
</dbReference>
<dbReference type="PANTHER" id="PTHR18919:SF107">
    <property type="entry name" value="ACETYL-COA ACETYLTRANSFERASE, CYTOSOLIC"/>
    <property type="match status" value="1"/>
</dbReference>
<dbReference type="PANTHER" id="PTHR18919">
    <property type="entry name" value="ACETYL-COA C-ACYLTRANSFERASE"/>
    <property type="match status" value="1"/>
</dbReference>
<dbReference type="Pfam" id="PF02803">
    <property type="entry name" value="Thiolase_C"/>
    <property type="match status" value="1"/>
</dbReference>
<dbReference type="Pfam" id="PF00108">
    <property type="entry name" value="Thiolase_N"/>
    <property type="match status" value="1"/>
</dbReference>
<dbReference type="PIRSF" id="PIRSF000429">
    <property type="entry name" value="Ac-CoA_Ac_transf"/>
    <property type="match status" value="1"/>
</dbReference>
<dbReference type="SUPFAM" id="SSF53901">
    <property type="entry name" value="Thiolase-like"/>
    <property type="match status" value="2"/>
</dbReference>
<dbReference type="PROSITE" id="PS00737">
    <property type="entry name" value="THIOLASE_2"/>
    <property type="match status" value="1"/>
</dbReference>
<dbReference type="PROSITE" id="PS00099">
    <property type="entry name" value="THIOLASE_3"/>
    <property type="match status" value="1"/>
</dbReference>
<feature type="chain" id="PRO_1000069506" description="3-ketoacyl-CoA thiolase">
    <location>
        <begin position="1"/>
        <end position="436"/>
    </location>
</feature>
<feature type="active site" description="Acyl-thioester intermediate" evidence="1">
    <location>
        <position position="99"/>
    </location>
</feature>
<feature type="active site" description="Proton acceptor" evidence="1">
    <location>
        <position position="392"/>
    </location>
</feature>
<feature type="active site" description="Proton acceptor" evidence="1">
    <location>
        <position position="422"/>
    </location>
</feature>
<reference key="1">
    <citation type="submission" date="2006-12" db="EMBL/GenBank/DDBJ databases">
        <title>Complete sequence of Shewanella amazonensis SB2B.</title>
        <authorList>
            <consortium name="US DOE Joint Genome Institute"/>
            <person name="Copeland A."/>
            <person name="Lucas S."/>
            <person name="Lapidus A."/>
            <person name="Barry K."/>
            <person name="Detter J.C."/>
            <person name="Glavina del Rio T."/>
            <person name="Hammon N."/>
            <person name="Israni S."/>
            <person name="Dalin E."/>
            <person name="Tice H."/>
            <person name="Pitluck S."/>
            <person name="Munk A.C."/>
            <person name="Brettin T."/>
            <person name="Bruce D."/>
            <person name="Han C."/>
            <person name="Tapia R."/>
            <person name="Gilna P."/>
            <person name="Schmutz J."/>
            <person name="Larimer F."/>
            <person name="Land M."/>
            <person name="Hauser L."/>
            <person name="Kyrpides N."/>
            <person name="Mikhailova N."/>
            <person name="Fredrickson J."/>
            <person name="Richardson P."/>
        </authorList>
    </citation>
    <scope>NUCLEOTIDE SEQUENCE [LARGE SCALE GENOMIC DNA]</scope>
    <source>
        <strain>ATCC BAA-1098 / SB2B</strain>
    </source>
</reference>
<protein>
    <recommendedName>
        <fullName evidence="1">3-ketoacyl-CoA thiolase</fullName>
        <ecNumber evidence="1">2.3.1.16</ecNumber>
    </recommendedName>
    <alternativeName>
        <fullName evidence="1">ACSs</fullName>
    </alternativeName>
    <alternativeName>
        <fullName evidence="1">Acetyl-CoA acyltransferase</fullName>
    </alternativeName>
    <alternativeName>
        <fullName evidence="1">Acyl-CoA ligase</fullName>
    </alternativeName>
    <alternativeName>
        <fullName evidence="1">Beta-ketothiolase</fullName>
    </alternativeName>
    <alternativeName>
        <fullName evidence="1">Fatty acid oxidation complex subunit beta</fullName>
    </alternativeName>
</protein>
<gene>
    <name evidence="1" type="primary">fadI</name>
    <name type="ordered locus">Sama_2168</name>
</gene>